<sequence>MNGVEVPAKIQKRIERLREEINDHNYRYYVLSQPTIPDSVYDELFHELQKLEKKYPETITPSSPTQRVGAEPLKVFEPVHHEIPMLSLDNVFDEKGLRAFDKRIRQRLKLDKPFEYVCEPKMDGVALSLLYENGELIRAATRGDGYTGENVTQNTRTIASVPLQLRGNDYPELVEIRGEVLMPREGFAKFNREAEKRGDKTFANPRNAASGSLRQLDPRITAKRPLIFYGYLIGLLKGKDFPKNHCDVLKWFKDWGIPVISEIKVVGGIEGCLDYYEHLVKTREKMPFDIDGIVIKVNSLQVQAELGFVSRAPRWAIAYKFPAQEKMTVVKAIEFQVGRTGAVTPVARLEPVSVSGVTVSNATLHNFDELYRKDVRVGDTVIVRRAGDVIPEVVGPILAKRPKKAKLIKIPSRCPVCHAEVIKPEGEAVARCMGGLYCRAQLRESIKHFASRRALDIEGLGDKLVELFIQEKLIKDITGIYQLKKSAITALPRMGEKSAENLLTAIEKSKKTTLPRFLYALGIRGVGDTTARTLARHFHELDLLMKASIETLQEIRDIGPVVAENIHAFFHQKHNAELINKLIHLGVHWPQEKAVVKSEIAGKTFVLTGALKSLTREEAEEKIERSGGKATSSVSKNTDYVIVGENPGSKYEKAKALGISLIDEEAFLKLLKS</sequence>
<organism>
    <name type="scientific">Coxiella burnetii (strain CbuK_Q154)</name>
    <name type="common">Coxiella burnetii (strain Q154)</name>
    <dbReference type="NCBI Taxonomy" id="434924"/>
    <lineage>
        <taxon>Bacteria</taxon>
        <taxon>Pseudomonadati</taxon>
        <taxon>Pseudomonadota</taxon>
        <taxon>Gammaproteobacteria</taxon>
        <taxon>Legionellales</taxon>
        <taxon>Coxiellaceae</taxon>
        <taxon>Coxiella</taxon>
    </lineage>
</organism>
<feature type="chain" id="PRO_0000380350" description="DNA ligase">
    <location>
        <begin position="1"/>
        <end position="673"/>
    </location>
</feature>
<feature type="domain" description="BRCT" evidence="1">
    <location>
        <begin position="595"/>
        <end position="673"/>
    </location>
</feature>
<feature type="active site" description="N6-AMP-lysine intermediate" evidence="1">
    <location>
        <position position="121"/>
    </location>
</feature>
<feature type="binding site" evidence="1">
    <location>
        <begin position="38"/>
        <end position="42"/>
    </location>
    <ligand>
        <name>NAD(+)</name>
        <dbReference type="ChEBI" id="CHEBI:57540"/>
    </ligand>
</feature>
<feature type="binding site" evidence="1">
    <location>
        <begin position="87"/>
        <end position="88"/>
    </location>
    <ligand>
        <name>NAD(+)</name>
        <dbReference type="ChEBI" id="CHEBI:57540"/>
    </ligand>
</feature>
<feature type="binding site" evidence="1">
    <location>
        <position position="119"/>
    </location>
    <ligand>
        <name>NAD(+)</name>
        <dbReference type="ChEBI" id="CHEBI:57540"/>
    </ligand>
</feature>
<feature type="binding site" evidence="1">
    <location>
        <position position="142"/>
    </location>
    <ligand>
        <name>NAD(+)</name>
        <dbReference type="ChEBI" id="CHEBI:57540"/>
    </ligand>
</feature>
<feature type="binding site" evidence="1">
    <location>
        <position position="179"/>
    </location>
    <ligand>
        <name>NAD(+)</name>
        <dbReference type="ChEBI" id="CHEBI:57540"/>
    </ligand>
</feature>
<feature type="binding site" evidence="1">
    <location>
        <position position="296"/>
    </location>
    <ligand>
        <name>NAD(+)</name>
        <dbReference type="ChEBI" id="CHEBI:57540"/>
    </ligand>
</feature>
<feature type="binding site" evidence="1">
    <location>
        <position position="320"/>
    </location>
    <ligand>
        <name>NAD(+)</name>
        <dbReference type="ChEBI" id="CHEBI:57540"/>
    </ligand>
</feature>
<feature type="binding site" evidence="1">
    <location>
        <position position="414"/>
    </location>
    <ligand>
        <name>Zn(2+)</name>
        <dbReference type="ChEBI" id="CHEBI:29105"/>
    </ligand>
</feature>
<feature type="binding site" evidence="1">
    <location>
        <position position="417"/>
    </location>
    <ligand>
        <name>Zn(2+)</name>
        <dbReference type="ChEBI" id="CHEBI:29105"/>
    </ligand>
</feature>
<feature type="binding site" evidence="1">
    <location>
        <position position="432"/>
    </location>
    <ligand>
        <name>Zn(2+)</name>
        <dbReference type="ChEBI" id="CHEBI:29105"/>
    </ligand>
</feature>
<feature type="binding site" evidence="1">
    <location>
        <position position="438"/>
    </location>
    <ligand>
        <name>Zn(2+)</name>
        <dbReference type="ChEBI" id="CHEBI:29105"/>
    </ligand>
</feature>
<comment type="function">
    <text evidence="1">DNA ligase that catalyzes the formation of phosphodiester linkages between 5'-phosphoryl and 3'-hydroxyl groups in double-stranded DNA using NAD as a coenzyme and as the energy source for the reaction. It is essential for DNA replication and repair of damaged DNA.</text>
</comment>
<comment type="catalytic activity">
    <reaction evidence="1">
        <text>NAD(+) + (deoxyribonucleotide)n-3'-hydroxyl + 5'-phospho-(deoxyribonucleotide)m = (deoxyribonucleotide)n+m + AMP + beta-nicotinamide D-nucleotide.</text>
        <dbReference type="EC" id="6.5.1.2"/>
    </reaction>
</comment>
<comment type="cofactor">
    <cofactor evidence="1">
        <name>Mg(2+)</name>
        <dbReference type="ChEBI" id="CHEBI:18420"/>
    </cofactor>
    <cofactor evidence="1">
        <name>Mn(2+)</name>
        <dbReference type="ChEBI" id="CHEBI:29035"/>
    </cofactor>
</comment>
<comment type="similarity">
    <text evidence="1">Belongs to the NAD-dependent DNA ligase family. LigA subfamily.</text>
</comment>
<accession>B6J878</accession>
<keyword id="KW-0227">DNA damage</keyword>
<keyword id="KW-0234">DNA repair</keyword>
<keyword id="KW-0235">DNA replication</keyword>
<keyword id="KW-0436">Ligase</keyword>
<keyword id="KW-0460">Magnesium</keyword>
<keyword id="KW-0464">Manganese</keyword>
<keyword id="KW-0479">Metal-binding</keyword>
<keyword id="KW-0520">NAD</keyword>
<keyword id="KW-0862">Zinc</keyword>
<name>DNLJ_COXB1</name>
<dbReference type="EC" id="6.5.1.2" evidence="1"/>
<dbReference type="EMBL" id="CP001020">
    <property type="protein sequence ID" value="ACJ20477.1"/>
    <property type="molecule type" value="Genomic_DNA"/>
</dbReference>
<dbReference type="RefSeq" id="WP_012570810.1">
    <property type="nucleotide sequence ID" value="NC_011528.1"/>
</dbReference>
<dbReference type="SMR" id="B6J878"/>
<dbReference type="KEGG" id="cbc:CbuK_1296"/>
<dbReference type="HOGENOM" id="CLU_007764_2_1_6"/>
<dbReference type="GO" id="GO:0005829">
    <property type="term" value="C:cytosol"/>
    <property type="evidence" value="ECO:0007669"/>
    <property type="project" value="TreeGrafter"/>
</dbReference>
<dbReference type="GO" id="GO:0003677">
    <property type="term" value="F:DNA binding"/>
    <property type="evidence" value="ECO:0007669"/>
    <property type="project" value="InterPro"/>
</dbReference>
<dbReference type="GO" id="GO:0003911">
    <property type="term" value="F:DNA ligase (NAD+) activity"/>
    <property type="evidence" value="ECO:0007669"/>
    <property type="project" value="UniProtKB-UniRule"/>
</dbReference>
<dbReference type="GO" id="GO:0046872">
    <property type="term" value="F:metal ion binding"/>
    <property type="evidence" value="ECO:0007669"/>
    <property type="project" value="UniProtKB-KW"/>
</dbReference>
<dbReference type="GO" id="GO:0006281">
    <property type="term" value="P:DNA repair"/>
    <property type="evidence" value="ECO:0007669"/>
    <property type="project" value="UniProtKB-KW"/>
</dbReference>
<dbReference type="GO" id="GO:0006260">
    <property type="term" value="P:DNA replication"/>
    <property type="evidence" value="ECO:0007669"/>
    <property type="project" value="UniProtKB-KW"/>
</dbReference>
<dbReference type="CDD" id="cd17748">
    <property type="entry name" value="BRCT_DNA_ligase_like"/>
    <property type="match status" value="1"/>
</dbReference>
<dbReference type="CDD" id="cd00114">
    <property type="entry name" value="LIGANc"/>
    <property type="match status" value="1"/>
</dbReference>
<dbReference type="FunFam" id="1.10.150.20:FF:000006">
    <property type="entry name" value="DNA ligase"/>
    <property type="match status" value="1"/>
</dbReference>
<dbReference type="FunFam" id="1.10.150.20:FF:000007">
    <property type="entry name" value="DNA ligase"/>
    <property type="match status" value="1"/>
</dbReference>
<dbReference type="FunFam" id="1.10.287.610:FF:000002">
    <property type="entry name" value="DNA ligase"/>
    <property type="match status" value="1"/>
</dbReference>
<dbReference type="FunFam" id="2.40.50.140:FF:000012">
    <property type="entry name" value="DNA ligase"/>
    <property type="match status" value="1"/>
</dbReference>
<dbReference type="FunFam" id="3.30.470.30:FF:000001">
    <property type="entry name" value="DNA ligase"/>
    <property type="match status" value="1"/>
</dbReference>
<dbReference type="FunFam" id="3.40.50.10190:FF:000086">
    <property type="entry name" value="DNA ligase"/>
    <property type="match status" value="1"/>
</dbReference>
<dbReference type="Gene3D" id="6.20.10.30">
    <property type="match status" value="1"/>
</dbReference>
<dbReference type="Gene3D" id="1.10.150.20">
    <property type="entry name" value="5' to 3' exonuclease, C-terminal subdomain"/>
    <property type="match status" value="2"/>
</dbReference>
<dbReference type="Gene3D" id="3.40.50.10190">
    <property type="entry name" value="BRCT domain"/>
    <property type="match status" value="1"/>
</dbReference>
<dbReference type="Gene3D" id="3.30.470.30">
    <property type="entry name" value="DNA ligase/mRNA capping enzyme"/>
    <property type="match status" value="1"/>
</dbReference>
<dbReference type="Gene3D" id="1.10.287.610">
    <property type="entry name" value="Helix hairpin bin"/>
    <property type="match status" value="1"/>
</dbReference>
<dbReference type="Gene3D" id="2.40.50.140">
    <property type="entry name" value="Nucleic acid-binding proteins"/>
    <property type="match status" value="1"/>
</dbReference>
<dbReference type="HAMAP" id="MF_01588">
    <property type="entry name" value="DNA_ligase_A"/>
    <property type="match status" value="1"/>
</dbReference>
<dbReference type="InterPro" id="IPR001357">
    <property type="entry name" value="BRCT_dom"/>
</dbReference>
<dbReference type="InterPro" id="IPR036420">
    <property type="entry name" value="BRCT_dom_sf"/>
</dbReference>
<dbReference type="InterPro" id="IPR041663">
    <property type="entry name" value="DisA/LigA_HHH"/>
</dbReference>
<dbReference type="InterPro" id="IPR001679">
    <property type="entry name" value="DNA_ligase"/>
</dbReference>
<dbReference type="InterPro" id="IPR018239">
    <property type="entry name" value="DNA_ligase_AS"/>
</dbReference>
<dbReference type="InterPro" id="IPR033136">
    <property type="entry name" value="DNA_ligase_CS"/>
</dbReference>
<dbReference type="InterPro" id="IPR013839">
    <property type="entry name" value="DNAligase_adenylation"/>
</dbReference>
<dbReference type="InterPro" id="IPR013840">
    <property type="entry name" value="DNAligase_N"/>
</dbReference>
<dbReference type="InterPro" id="IPR003583">
    <property type="entry name" value="Hlx-hairpin-Hlx_DNA-bd_motif"/>
</dbReference>
<dbReference type="InterPro" id="IPR012340">
    <property type="entry name" value="NA-bd_OB-fold"/>
</dbReference>
<dbReference type="InterPro" id="IPR004150">
    <property type="entry name" value="NAD_DNA_ligase_OB"/>
</dbReference>
<dbReference type="InterPro" id="IPR010994">
    <property type="entry name" value="RuvA_2-like"/>
</dbReference>
<dbReference type="InterPro" id="IPR004149">
    <property type="entry name" value="Znf_DNAligase_C4"/>
</dbReference>
<dbReference type="NCBIfam" id="TIGR00575">
    <property type="entry name" value="dnlj"/>
    <property type="match status" value="1"/>
</dbReference>
<dbReference type="NCBIfam" id="NF005932">
    <property type="entry name" value="PRK07956.1"/>
    <property type="match status" value="1"/>
</dbReference>
<dbReference type="PANTHER" id="PTHR23389">
    <property type="entry name" value="CHROMOSOME TRANSMISSION FIDELITY FACTOR 18"/>
    <property type="match status" value="1"/>
</dbReference>
<dbReference type="PANTHER" id="PTHR23389:SF9">
    <property type="entry name" value="DNA LIGASE"/>
    <property type="match status" value="1"/>
</dbReference>
<dbReference type="Pfam" id="PF00533">
    <property type="entry name" value="BRCT"/>
    <property type="match status" value="1"/>
</dbReference>
<dbReference type="Pfam" id="PF01653">
    <property type="entry name" value="DNA_ligase_aden"/>
    <property type="match status" value="1"/>
</dbReference>
<dbReference type="Pfam" id="PF03120">
    <property type="entry name" value="DNA_ligase_OB"/>
    <property type="match status" value="1"/>
</dbReference>
<dbReference type="Pfam" id="PF03119">
    <property type="entry name" value="DNA_ligase_ZBD"/>
    <property type="match status" value="1"/>
</dbReference>
<dbReference type="Pfam" id="PF12826">
    <property type="entry name" value="HHH_2"/>
    <property type="match status" value="1"/>
</dbReference>
<dbReference type="Pfam" id="PF14520">
    <property type="entry name" value="HHH_5"/>
    <property type="match status" value="1"/>
</dbReference>
<dbReference type="Pfam" id="PF22745">
    <property type="entry name" value="Nlig-Ia"/>
    <property type="match status" value="1"/>
</dbReference>
<dbReference type="PIRSF" id="PIRSF001604">
    <property type="entry name" value="LigA"/>
    <property type="match status" value="1"/>
</dbReference>
<dbReference type="SMART" id="SM00292">
    <property type="entry name" value="BRCT"/>
    <property type="match status" value="1"/>
</dbReference>
<dbReference type="SMART" id="SM00278">
    <property type="entry name" value="HhH1"/>
    <property type="match status" value="4"/>
</dbReference>
<dbReference type="SMART" id="SM00532">
    <property type="entry name" value="LIGANc"/>
    <property type="match status" value="1"/>
</dbReference>
<dbReference type="SUPFAM" id="SSF52113">
    <property type="entry name" value="BRCT domain"/>
    <property type="match status" value="1"/>
</dbReference>
<dbReference type="SUPFAM" id="SSF56091">
    <property type="entry name" value="DNA ligase/mRNA capping enzyme, catalytic domain"/>
    <property type="match status" value="1"/>
</dbReference>
<dbReference type="SUPFAM" id="SSF50249">
    <property type="entry name" value="Nucleic acid-binding proteins"/>
    <property type="match status" value="1"/>
</dbReference>
<dbReference type="SUPFAM" id="SSF47781">
    <property type="entry name" value="RuvA domain 2-like"/>
    <property type="match status" value="1"/>
</dbReference>
<dbReference type="PROSITE" id="PS50172">
    <property type="entry name" value="BRCT"/>
    <property type="match status" value="1"/>
</dbReference>
<dbReference type="PROSITE" id="PS01055">
    <property type="entry name" value="DNA_LIGASE_N1"/>
    <property type="match status" value="1"/>
</dbReference>
<dbReference type="PROSITE" id="PS01056">
    <property type="entry name" value="DNA_LIGASE_N2"/>
    <property type="match status" value="1"/>
</dbReference>
<protein>
    <recommendedName>
        <fullName evidence="1">DNA ligase</fullName>
        <ecNumber evidence="1">6.5.1.2</ecNumber>
    </recommendedName>
    <alternativeName>
        <fullName evidence="1">Polydeoxyribonucleotide synthase [NAD(+)]</fullName>
    </alternativeName>
</protein>
<proteinExistence type="inferred from homology"/>
<evidence type="ECO:0000255" key="1">
    <source>
        <dbReference type="HAMAP-Rule" id="MF_01588"/>
    </source>
</evidence>
<gene>
    <name evidence="1" type="primary">ligA</name>
    <name type="ordered locus">CbuK_1296</name>
</gene>
<reference key="1">
    <citation type="journal article" date="2009" name="Infect. Immun.">
        <title>Comparative genomics reveal extensive transposon-mediated genomic plasticity and diversity among potential effector proteins within the genus Coxiella.</title>
        <authorList>
            <person name="Beare P.A."/>
            <person name="Unsworth N."/>
            <person name="Andoh M."/>
            <person name="Voth D.E."/>
            <person name="Omsland A."/>
            <person name="Gilk S.D."/>
            <person name="Williams K.P."/>
            <person name="Sobral B.W."/>
            <person name="Kupko J.J. III"/>
            <person name="Porcella S.F."/>
            <person name="Samuel J.E."/>
            <person name="Heinzen R.A."/>
        </authorList>
    </citation>
    <scope>NUCLEOTIDE SEQUENCE [LARGE SCALE GENOMIC DNA]</scope>
    <source>
        <strain>CbuK_Q154</strain>
    </source>
</reference>